<comment type="function">
    <text evidence="1">Reversibly transfers an adenylyl group from ATP to 4'-phosphopantetheine, yielding dephospho-CoA (dPCoA) and pyrophosphate.</text>
</comment>
<comment type="catalytic activity">
    <reaction evidence="1">
        <text>(R)-4'-phosphopantetheine + ATP + H(+) = 3'-dephospho-CoA + diphosphate</text>
        <dbReference type="Rhea" id="RHEA:19801"/>
        <dbReference type="ChEBI" id="CHEBI:15378"/>
        <dbReference type="ChEBI" id="CHEBI:30616"/>
        <dbReference type="ChEBI" id="CHEBI:33019"/>
        <dbReference type="ChEBI" id="CHEBI:57328"/>
        <dbReference type="ChEBI" id="CHEBI:61723"/>
        <dbReference type="EC" id="2.7.7.3"/>
    </reaction>
</comment>
<comment type="cofactor">
    <cofactor evidence="1">
        <name>Mg(2+)</name>
        <dbReference type="ChEBI" id="CHEBI:18420"/>
    </cofactor>
</comment>
<comment type="pathway">
    <text evidence="1">Cofactor biosynthesis; coenzyme A biosynthesis; CoA from (R)-pantothenate: step 4/5.</text>
</comment>
<comment type="subunit">
    <text evidence="1">Homohexamer.</text>
</comment>
<comment type="subcellular location">
    <subcellularLocation>
        <location evidence="1">Cytoplasm</location>
    </subcellularLocation>
</comment>
<comment type="similarity">
    <text evidence="1">Belongs to the bacterial CoaD family.</text>
</comment>
<reference key="1">
    <citation type="journal article" date="2001" name="Nature">
        <title>Complete genome sequence of a multiple drug resistant Salmonella enterica serovar Typhi CT18.</title>
        <authorList>
            <person name="Parkhill J."/>
            <person name="Dougan G."/>
            <person name="James K.D."/>
            <person name="Thomson N.R."/>
            <person name="Pickard D."/>
            <person name="Wain J."/>
            <person name="Churcher C.M."/>
            <person name="Mungall K.L."/>
            <person name="Bentley S.D."/>
            <person name="Holden M.T.G."/>
            <person name="Sebaihia M."/>
            <person name="Baker S."/>
            <person name="Basham D."/>
            <person name="Brooks K."/>
            <person name="Chillingworth T."/>
            <person name="Connerton P."/>
            <person name="Cronin A."/>
            <person name="Davis P."/>
            <person name="Davies R.M."/>
            <person name="Dowd L."/>
            <person name="White N."/>
            <person name="Farrar J."/>
            <person name="Feltwell T."/>
            <person name="Hamlin N."/>
            <person name="Haque A."/>
            <person name="Hien T.T."/>
            <person name="Holroyd S."/>
            <person name="Jagels K."/>
            <person name="Krogh A."/>
            <person name="Larsen T.S."/>
            <person name="Leather S."/>
            <person name="Moule S."/>
            <person name="O'Gaora P."/>
            <person name="Parry C."/>
            <person name="Quail M.A."/>
            <person name="Rutherford K.M."/>
            <person name="Simmonds M."/>
            <person name="Skelton J."/>
            <person name="Stevens K."/>
            <person name="Whitehead S."/>
            <person name="Barrell B.G."/>
        </authorList>
    </citation>
    <scope>NUCLEOTIDE SEQUENCE [LARGE SCALE GENOMIC DNA]</scope>
    <source>
        <strain>CT18</strain>
    </source>
</reference>
<reference key="2">
    <citation type="journal article" date="2003" name="J. Bacteriol.">
        <title>Comparative genomics of Salmonella enterica serovar Typhi strains Ty2 and CT18.</title>
        <authorList>
            <person name="Deng W."/>
            <person name="Liou S.-R."/>
            <person name="Plunkett G. III"/>
            <person name="Mayhew G.F."/>
            <person name="Rose D.J."/>
            <person name="Burland V."/>
            <person name="Kodoyianni V."/>
            <person name="Schwartz D.C."/>
            <person name="Blattner F.R."/>
        </authorList>
    </citation>
    <scope>NUCLEOTIDE SEQUENCE [LARGE SCALE GENOMIC DNA]</scope>
    <source>
        <strain>ATCC 700931 / Ty2</strain>
    </source>
</reference>
<gene>
    <name evidence="1" type="primary">coaD</name>
    <name type="ordered locus">STY4069</name>
    <name type="ordered locus">t3793</name>
</gene>
<evidence type="ECO:0000255" key="1">
    <source>
        <dbReference type="HAMAP-Rule" id="MF_00151"/>
    </source>
</evidence>
<keyword id="KW-0067">ATP-binding</keyword>
<keyword id="KW-0173">Coenzyme A biosynthesis</keyword>
<keyword id="KW-0963">Cytoplasm</keyword>
<keyword id="KW-0460">Magnesium</keyword>
<keyword id="KW-0547">Nucleotide-binding</keyword>
<keyword id="KW-0548">Nucleotidyltransferase</keyword>
<keyword id="KW-0808">Transferase</keyword>
<protein>
    <recommendedName>
        <fullName evidence="1">Phosphopantetheine adenylyltransferase</fullName>
        <ecNumber evidence="1">2.7.7.3</ecNumber>
    </recommendedName>
    <alternativeName>
        <fullName evidence="1">Dephospho-CoA pyrophosphorylase</fullName>
    </alternativeName>
    <alternativeName>
        <fullName evidence="1">Pantetheine-phosphate adenylyltransferase</fullName>
        <shortName evidence="1">PPAT</shortName>
    </alternativeName>
</protein>
<name>COAD_SALTI</name>
<organism>
    <name type="scientific">Salmonella typhi</name>
    <dbReference type="NCBI Taxonomy" id="90370"/>
    <lineage>
        <taxon>Bacteria</taxon>
        <taxon>Pseudomonadati</taxon>
        <taxon>Pseudomonadota</taxon>
        <taxon>Gammaproteobacteria</taxon>
        <taxon>Enterobacterales</taxon>
        <taxon>Enterobacteriaceae</taxon>
        <taxon>Salmonella</taxon>
    </lineage>
</organism>
<feature type="chain" id="PRO_0000156266" description="Phosphopantetheine adenylyltransferase">
    <location>
        <begin position="1"/>
        <end position="159"/>
    </location>
</feature>
<feature type="binding site" evidence="1">
    <location>
        <begin position="10"/>
        <end position="11"/>
    </location>
    <ligand>
        <name>ATP</name>
        <dbReference type="ChEBI" id="CHEBI:30616"/>
    </ligand>
</feature>
<feature type="binding site" evidence="1">
    <location>
        <position position="10"/>
    </location>
    <ligand>
        <name>substrate</name>
    </ligand>
</feature>
<feature type="binding site" evidence="1">
    <location>
        <position position="18"/>
    </location>
    <ligand>
        <name>ATP</name>
        <dbReference type="ChEBI" id="CHEBI:30616"/>
    </ligand>
</feature>
<feature type="binding site" evidence="1">
    <location>
        <position position="42"/>
    </location>
    <ligand>
        <name>substrate</name>
    </ligand>
</feature>
<feature type="binding site" evidence="1">
    <location>
        <position position="74"/>
    </location>
    <ligand>
        <name>substrate</name>
    </ligand>
</feature>
<feature type="binding site" evidence="1">
    <location>
        <position position="88"/>
    </location>
    <ligand>
        <name>substrate</name>
    </ligand>
</feature>
<feature type="binding site" evidence="1">
    <location>
        <begin position="89"/>
        <end position="91"/>
    </location>
    <ligand>
        <name>ATP</name>
        <dbReference type="ChEBI" id="CHEBI:30616"/>
    </ligand>
</feature>
<feature type="binding site" evidence="1">
    <location>
        <position position="99"/>
    </location>
    <ligand>
        <name>ATP</name>
        <dbReference type="ChEBI" id="CHEBI:30616"/>
    </ligand>
</feature>
<feature type="binding site" evidence="1">
    <location>
        <begin position="124"/>
        <end position="130"/>
    </location>
    <ligand>
        <name>ATP</name>
        <dbReference type="ChEBI" id="CHEBI:30616"/>
    </ligand>
</feature>
<feature type="site" description="Transition state stabilizer" evidence="1">
    <location>
        <position position="18"/>
    </location>
</feature>
<proteinExistence type="inferred from homology"/>
<dbReference type="EC" id="2.7.7.3" evidence="1"/>
<dbReference type="EMBL" id="AL513382">
    <property type="protein sequence ID" value="CAD03268.1"/>
    <property type="molecule type" value="Genomic_DNA"/>
</dbReference>
<dbReference type="EMBL" id="AE014613">
    <property type="protein sequence ID" value="AAO71275.1"/>
    <property type="molecule type" value="Genomic_DNA"/>
</dbReference>
<dbReference type="RefSeq" id="NP_458201.1">
    <property type="nucleotide sequence ID" value="NC_003198.1"/>
</dbReference>
<dbReference type="RefSeq" id="WP_001171888.1">
    <property type="nucleotide sequence ID" value="NZ_WSUR01000001.1"/>
</dbReference>
<dbReference type="SMR" id="Q8Z2H1"/>
<dbReference type="STRING" id="220341.gene:17587912"/>
<dbReference type="KEGG" id="stt:t3793"/>
<dbReference type="KEGG" id="sty:STY4069"/>
<dbReference type="PATRIC" id="fig|220341.7.peg.4154"/>
<dbReference type="eggNOG" id="COG0669">
    <property type="taxonomic scope" value="Bacteria"/>
</dbReference>
<dbReference type="HOGENOM" id="CLU_100149_0_1_6"/>
<dbReference type="OMA" id="MALMNRK"/>
<dbReference type="OrthoDB" id="9806661at2"/>
<dbReference type="UniPathway" id="UPA00241">
    <property type="reaction ID" value="UER00355"/>
</dbReference>
<dbReference type="Proteomes" id="UP000000541">
    <property type="component" value="Chromosome"/>
</dbReference>
<dbReference type="Proteomes" id="UP000002670">
    <property type="component" value="Chromosome"/>
</dbReference>
<dbReference type="GO" id="GO:0005737">
    <property type="term" value="C:cytoplasm"/>
    <property type="evidence" value="ECO:0007669"/>
    <property type="project" value="UniProtKB-SubCell"/>
</dbReference>
<dbReference type="GO" id="GO:0005524">
    <property type="term" value="F:ATP binding"/>
    <property type="evidence" value="ECO:0007669"/>
    <property type="project" value="UniProtKB-KW"/>
</dbReference>
<dbReference type="GO" id="GO:0004595">
    <property type="term" value="F:pantetheine-phosphate adenylyltransferase activity"/>
    <property type="evidence" value="ECO:0007669"/>
    <property type="project" value="UniProtKB-UniRule"/>
</dbReference>
<dbReference type="GO" id="GO:0015937">
    <property type="term" value="P:coenzyme A biosynthetic process"/>
    <property type="evidence" value="ECO:0007669"/>
    <property type="project" value="UniProtKB-UniRule"/>
</dbReference>
<dbReference type="CDD" id="cd02163">
    <property type="entry name" value="PPAT"/>
    <property type="match status" value="1"/>
</dbReference>
<dbReference type="FunFam" id="3.40.50.620:FF:000012">
    <property type="entry name" value="Phosphopantetheine adenylyltransferase"/>
    <property type="match status" value="1"/>
</dbReference>
<dbReference type="Gene3D" id="3.40.50.620">
    <property type="entry name" value="HUPs"/>
    <property type="match status" value="1"/>
</dbReference>
<dbReference type="HAMAP" id="MF_00151">
    <property type="entry name" value="PPAT_bact"/>
    <property type="match status" value="1"/>
</dbReference>
<dbReference type="InterPro" id="IPR004821">
    <property type="entry name" value="Cyt_trans-like"/>
</dbReference>
<dbReference type="InterPro" id="IPR001980">
    <property type="entry name" value="PPAT"/>
</dbReference>
<dbReference type="InterPro" id="IPR014729">
    <property type="entry name" value="Rossmann-like_a/b/a_fold"/>
</dbReference>
<dbReference type="NCBIfam" id="TIGR01510">
    <property type="entry name" value="coaD_prev_kdtB"/>
    <property type="match status" value="1"/>
</dbReference>
<dbReference type="NCBIfam" id="TIGR00125">
    <property type="entry name" value="cyt_tran_rel"/>
    <property type="match status" value="1"/>
</dbReference>
<dbReference type="PANTHER" id="PTHR21342">
    <property type="entry name" value="PHOSPHOPANTETHEINE ADENYLYLTRANSFERASE"/>
    <property type="match status" value="1"/>
</dbReference>
<dbReference type="PANTHER" id="PTHR21342:SF1">
    <property type="entry name" value="PHOSPHOPANTETHEINE ADENYLYLTRANSFERASE"/>
    <property type="match status" value="1"/>
</dbReference>
<dbReference type="Pfam" id="PF01467">
    <property type="entry name" value="CTP_transf_like"/>
    <property type="match status" value="1"/>
</dbReference>
<dbReference type="PRINTS" id="PR01020">
    <property type="entry name" value="LPSBIOSNTHSS"/>
</dbReference>
<dbReference type="SUPFAM" id="SSF52374">
    <property type="entry name" value="Nucleotidylyl transferase"/>
    <property type="match status" value="1"/>
</dbReference>
<accession>Q8Z2H1</accession>
<sequence length="159" mass="17925">MQKRAIYPGTFDPITNGHLDIVTRATQMFDHVILAIAASPGKKPMFTLNERVALAQKATAHLGNVEVVGFSDLMANFARDRQANILIRGLRAVADFEYEMQLAHMNRHLMPQLESVFLMPSKEWSFISSSLVKEVARHQGDVTHFLPDNVHQALMDKLK</sequence>